<protein>
    <recommendedName>
        <fullName evidence="1">UPF0391 membrane protein BamMC406_6344</fullName>
    </recommendedName>
</protein>
<reference key="1">
    <citation type="submission" date="2008-04" db="EMBL/GenBank/DDBJ databases">
        <title>Complete sequence of chromosome 3 of Burkholderia ambifaria MC40-6.</title>
        <authorList>
            <person name="Copeland A."/>
            <person name="Lucas S."/>
            <person name="Lapidus A."/>
            <person name="Glavina del Rio T."/>
            <person name="Dalin E."/>
            <person name="Tice H."/>
            <person name="Pitluck S."/>
            <person name="Chain P."/>
            <person name="Malfatti S."/>
            <person name="Shin M."/>
            <person name="Vergez L."/>
            <person name="Lang D."/>
            <person name="Schmutz J."/>
            <person name="Larimer F."/>
            <person name="Land M."/>
            <person name="Hauser L."/>
            <person name="Kyrpides N."/>
            <person name="Lykidis A."/>
            <person name="Ramette A."/>
            <person name="Konstantinidis K."/>
            <person name="Tiedje J."/>
            <person name="Richardson P."/>
        </authorList>
    </citation>
    <scope>NUCLEOTIDE SEQUENCE [LARGE SCALE GENOMIC DNA]</scope>
    <source>
        <strain>MC40-6</strain>
    </source>
</reference>
<sequence length="53" mass="5762">MLRYAIIFFVIAIIAAVFGFGGIAAGAAEIAKILFYIFVVIFLVTLLLGVVRR</sequence>
<organism>
    <name type="scientific">Burkholderia ambifaria (strain MC40-6)</name>
    <dbReference type="NCBI Taxonomy" id="398577"/>
    <lineage>
        <taxon>Bacteria</taxon>
        <taxon>Pseudomonadati</taxon>
        <taxon>Pseudomonadota</taxon>
        <taxon>Betaproteobacteria</taxon>
        <taxon>Burkholderiales</taxon>
        <taxon>Burkholderiaceae</taxon>
        <taxon>Burkholderia</taxon>
        <taxon>Burkholderia cepacia complex</taxon>
    </lineage>
</organism>
<dbReference type="EMBL" id="CP001027">
    <property type="protein sequence ID" value="ACB68776.1"/>
    <property type="molecule type" value="Genomic_DNA"/>
</dbReference>
<dbReference type="RefSeq" id="WP_006498332.1">
    <property type="nucleotide sequence ID" value="NC_010557.1"/>
</dbReference>
<dbReference type="SMR" id="B1Z4W3"/>
<dbReference type="KEGG" id="bac:BamMC406_6344"/>
<dbReference type="HOGENOM" id="CLU_187346_0_1_4"/>
<dbReference type="Proteomes" id="UP000001680">
    <property type="component" value="Chromosome 3"/>
</dbReference>
<dbReference type="GO" id="GO:0005886">
    <property type="term" value="C:plasma membrane"/>
    <property type="evidence" value="ECO:0007669"/>
    <property type="project" value="UniProtKB-SubCell"/>
</dbReference>
<dbReference type="HAMAP" id="MF_01361">
    <property type="entry name" value="UPF0391"/>
    <property type="match status" value="1"/>
</dbReference>
<dbReference type="InterPro" id="IPR009760">
    <property type="entry name" value="DUF1328"/>
</dbReference>
<dbReference type="NCBIfam" id="NF010226">
    <property type="entry name" value="PRK13682.1-1"/>
    <property type="match status" value="1"/>
</dbReference>
<dbReference type="NCBIfam" id="NF010229">
    <property type="entry name" value="PRK13682.1-4"/>
    <property type="match status" value="1"/>
</dbReference>
<dbReference type="Pfam" id="PF07043">
    <property type="entry name" value="DUF1328"/>
    <property type="match status" value="1"/>
</dbReference>
<dbReference type="PIRSF" id="PIRSF036466">
    <property type="entry name" value="UCP036466"/>
    <property type="match status" value="1"/>
</dbReference>
<keyword id="KW-1003">Cell membrane</keyword>
<keyword id="KW-0472">Membrane</keyword>
<keyword id="KW-0812">Transmembrane</keyword>
<keyword id="KW-1133">Transmembrane helix</keyword>
<name>Y6344_BURA4</name>
<accession>B1Z4W3</accession>
<comment type="subcellular location">
    <subcellularLocation>
        <location evidence="1">Cell membrane</location>
        <topology evidence="1">Multi-pass membrane protein</topology>
    </subcellularLocation>
</comment>
<comment type="similarity">
    <text evidence="1">Belongs to the UPF0391 family.</text>
</comment>
<evidence type="ECO:0000255" key="1">
    <source>
        <dbReference type="HAMAP-Rule" id="MF_01361"/>
    </source>
</evidence>
<feature type="chain" id="PRO_1000143706" description="UPF0391 membrane protein BamMC406_6344">
    <location>
        <begin position="1"/>
        <end position="53"/>
    </location>
</feature>
<feature type="transmembrane region" description="Helical" evidence="1">
    <location>
        <begin position="5"/>
        <end position="25"/>
    </location>
</feature>
<feature type="transmembrane region" description="Helical" evidence="1">
    <location>
        <begin position="30"/>
        <end position="50"/>
    </location>
</feature>
<proteinExistence type="inferred from homology"/>
<gene>
    <name type="ordered locus">BamMC406_6344</name>
</gene>